<sequence length="424" mass="47013">MAKNIQAIRGMNDYLPSETAIWQRIEGTLKNVLGSYGYSEIRLPIVEQTPLFKRAIGEVTDVVEKEMYTFEDRNGDSLTLRPEGTAGCVRAGIEHGLLYNQEQHLWYIGPMFRHERPQKGRYRQFHQLGCEVFGLQGPDIDAELIMLTARWWRALGISEHVTLELNSIGSLEARANYRDALVAFLEQHKEKLDEDCKRRMYTSPLRVLDSKNPEVQALLNDAPALGDYLDEESREHFAGLCKLLESAGIAYTVNQRLVRGLDYYNRTVFEWVTNSLGSQGTVCAGGRYDGLVEQLGGRATPAVGFAMGLERLVLLVQAVNPEFKADPVVDIYLVASGADTQSAAMALAERLRDELPGVKLMTNHGGGNFKKQFARADKWGARVAVVLGESEVANGTAVVKDLRSGEQTAVAQDSVAAHLRTLLG</sequence>
<organism>
    <name type="scientific">Shigella dysenteriae serotype 1 (strain Sd197)</name>
    <dbReference type="NCBI Taxonomy" id="300267"/>
    <lineage>
        <taxon>Bacteria</taxon>
        <taxon>Pseudomonadati</taxon>
        <taxon>Pseudomonadota</taxon>
        <taxon>Gammaproteobacteria</taxon>
        <taxon>Enterobacterales</taxon>
        <taxon>Enterobacteriaceae</taxon>
        <taxon>Shigella</taxon>
    </lineage>
</organism>
<proteinExistence type="inferred from homology"/>
<feature type="chain" id="PRO_1000016454" description="Histidine--tRNA ligase">
    <location>
        <begin position="1"/>
        <end position="424"/>
    </location>
</feature>
<comment type="catalytic activity">
    <reaction evidence="1">
        <text>tRNA(His) + L-histidine + ATP = L-histidyl-tRNA(His) + AMP + diphosphate + H(+)</text>
        <dbReference type="Rhea" id="RHEA:17313"/>
        <dbReference type="Rhea" id="RHEA-COMP:9665"/>
        <dbReference type="Rhea" id="RHEA-COMP:9689"/>
        <dbReference type="ChEBI" id="CHEBI:15378"/>
        <dbReference type="ChEBI" id="CHEBI:30616"/>
        <dbReference type="ChEBI" id="CHEBI:33019"/>
        <dbReference type="ChEBI" id="CHEBI:57595"/>
        <dbReference type="ChEBI" id="CHEBI:78442"/>
        <dbReference type="ChEBI" id="CHEBI:78527"/>
        <dbReference type="ChEBI" id="CHEBI:456215"/>
        <dbReference type="EC" id="6.1.1.21"/>
    </reaction>
</comment>
<comment type="subunit">
    <text evidence="1">Homodimer.</text>
</comment>
<comment type="subcellular location">
    <subcellularLocation>
        <location evidence="1">Cytoplasm</location>
    </subcellularLocation>
</comment>
<comment type="similarity">
    <text evidence="1">Belongs to the class-II aminoacyl-tRNA synthetase family.</text>
</comment>
<evidence type="ECO:0000255" key="1">
    <source>
        <dbReference type="HAMAP-Rule" id="MF_00127"/>
    </source>
</evidence>
<protein>
    <recommendedName>
        <fullName evidence="1">Histidine--tRNA ligase</fullName>
        <ecNumber evidence="1">6.1.1.21</ecNumber>
    </recommendedName>
    <alternativeName>
        <fullName evidence="1">Histidyl-tRNA synthetase</fullName>
        <shortName evidence="1">HisRS</shortName>
    </alternativeName>
</protein>
<keyword id="KW-0030">Aminoacyl-tRNA synthetase</keyword>
<keyword id="KW-0067">ATP-binding</keyword>
<keyword id="KW-0963">Cytoplasm</keyword>
<keyword id="KW-0436">Ligase</keyword>
<keyword id="KW-0547">Nucleotide-binding</keyword>
<keyword id="KW-0648">Protein biosynthesis</keyword>
<keyword id="KW-1185">Reference proteome</keyword>
<dbReference type="EC" id="6.1.1.21" evidence="1"/>
<dbReference type="EMBL" id="CP000034">
    <property type="protein sequence ID" value="ABB62757.1"/>
    <property type="molecule type" value="Genomic_DNA"/>
</dbReference>
<dbReference type="RefSeq" id="WP_001107194.1">
    <property type="nucleotide sequence ID" value="NC_007606.1"/>
</dbReference>
<dbReference type="RefSeq" id="YP_404248.1">
    <property type="nucleotide sequence ID" value="NC_007606.1"/>
</dbReference>
<dbReference type="SMR" id="Q32D48"/>
<dbReference type="STRING" id="300267.SDY_2710"/>
<dbReference type="EnsemblBacteria" id="ABB62757">
    <property type="protein sequence ID" value="ABB62757"/>
    <property type="gene ID" value="SDY_2710"/>
</dbReference>
<dbReference type="KEGG" id="sdy:SDY_2710"/>
<dbReference type="PATRIC" id="fig|300267.13.peg.3268"/>
<dbReference type="HOGENOM" id="CLU_025113_1_1_6"/>
<dbReference type="Proteomes" id="UP000002716">
    <property type="component" value="Chromosome"/>
</dbReference>
<dbReference type="GO" id="GO:0005737">
    <property type="term" value="C:cytoplasm"/>
    <property type="evidence" value="ECO:0007669"/>
    <property type="project" value="UniProtKB-SubCell"/>
</dbReference>
<dbReference type="GO" id="GO:0005524">
    <property type="term" value="F:ATP binding"/>
    <property type="evidence" value="ECO:0007669"/>
    <property type="project" value="UniProtKB-UniRule"/>
</dbReference>
<dbReference type="GO" id="GO:0004821">
    <property type="term" value="F:histidine-tRNA ligase activity"/>
    <property type="evidence" value="ECO:0007669"/>
    <property type="project" value="UniProtKB-UniRule"/>
</dbReference>
<dbReference type="GO" id="GO:0006427">
    <property type="term" value="P:histidyl-tRNA aminoacylation"/>
    <property type="evidence" value="ECO:0007669"/>
    <property type="project" value="UniProtKB-UniRule"/>
</dbReference>
<dbReference type="CDD" id="cd00773">
    <property type="entry name" value="HisRS-like_core"/>
    <property type="match status" value="1"/>
</dbReference>
<dbReference type="CDD" id="cd00859">
    <property type="entry name" value="HisRS_anticodon"/>
    <property type="match status" value="1"/>
</dbReference>
<dbReference type="FunFam" id="3.30.930.10:FF:000005">
    <property type="entry name" value="Histidine--tRNA ligase"/>
    <property type="match status" value="1"/>
</dbReference>
<dbReference type="FunFam" id="3.40.50.800:FF:000007">
    <property type="entry name" value="Histidine--tRNA ligase"/>
    <property type="match status" value="1"/>
</dbReference>
<dbReference type="Gene3D" id="3.40.50.800">
    <property type="entry name" value="Anticodon-binding domain"/>
    <property type="match status" value="1"/>
</dbReference>
<dbReference type="Gene3D" id="3.30.930.10">
    <property type="entry name" value="Bira Bifunctional Protein, Domain 2"/>
    <property type="match status" value="1"/>
</dbReference>
<dbReference type="HAMAP" id="MF_00127">
    <property type="entry name" value="His_tRNA_synth"/>
    <property type="match status" value="1"/>
</dbReference>
<dbReference type="InterPro" id="IPR006195">
    <property type="entry name" value="aa-tRNA-synth_II"/>
</dbReference>
<dbReference type="InterPro" id="IPR045864">
    <property type="entry name" value="aa-tRNA-synth_II/BPL/LPL"/>
</dbReference>
<dbReference type="InterPro" id="IPR004154">
    <property type="entry name" value="Anticodon-bd"/>
</dbReference>
<dbReference type="InterPro" id="IPR036621">
    <property type="entry name" value="Anticodon-bd_dom_sf"/>
</dbReference>
<dbReference type="InterPro" id="IPR015807">
    <property type="entry name" value="His-tRNA-ligase"/>
</dbReference>
<dbReference type="InterPro" id="IPR041715">
    <property type="entry name" value="HisRS-like_core"/>
</dbReference>
<dbReference type="InterPro" id="IPR004516">
    <property type="entry name" value="HisRS/HisZ"/>
</dbReference>
<dbReference type="InterPro" id="IPR033656">
    <property type="entry name" value="HisRS_anticodon"/>
</dbReference>
<dbReference type="NCBIfam" id="TIGR00442">
    <property type="entry name" value="hisS"/>
    <property type="match status" value="1"/>
</dbReference>
<dbReference type="PANTHER" id="PTHR43707:SF1">
    <property type="entry name" value="HISTIDINE--TRNA LIGASE, MITOCHONDRIAL-RELATED"/>
    <property type="match status" value="1"/>
</dbReference>
<dbReference type="PANTHER" id="PTHR43707">
    <property type="entry name" value="HISTIDYL-TRNA SYNTHETASE"/>
    <property type="match status" value="1"/>
</dbReference>
<dbReference type="Pfam" id="PF03129">
    <property type="entry name" value="HGTP_anticodon"/>
    <property type="match status" value="1"/>
</dbReference>
<dbReference type="Pfam" id="PF13393">
    <property type="entry name" value="tRNA-synt_His"/>
    <property type="match status" value="1"/>
</dbReference>
<dbReference type="PIRSF" id="PIRSF001549">
    <property type="entry name" value="His-tRNA_synth"/>
    <property type="match status" value="1"/>
</dbReference>
<dbReference type="SUPFAM" id="SSF52954">
    <property type="entry name" value="Class II aaRS ABD-related"/>
    <property type="match status" value="1"/>
</dbReference>
<dbReference type="SUPFAM" id="SSF55681">
    <property type="entry name" value="Class II aaRS and biotin synthetases"/>
    <property type="match status" value="1"/>
</dbReference>
<dbReference type="PROSITE" id="PS50862">
    <property type="entry name" value="AA_TRNA_LIGASE_II"/>
    <property type="match status" value="1"/>
</dbReference>
<reference key="1">
    <citation type="journal article" date="2005" name="Nucleic Acids Res.">
        <title>Genome dynamics and diversity of Shigella species, the etiologic agents of bacillary dysentery.</title>
        <authorList>
            <person name="Yang F."/>
            <person name="Yang J."/>
            <person name="Zhang X."/>
            <person name="Chen L."/>
            <person name="Jiang Y."/>
            <person name="Yan Y."/>
            <person name="Tang X."/>
            <person name="Wang J."/>
            <person name="Xiong Z."/>
            <person name="Dong J."/>
            <person name="Xue Y."/>
            <person name="Zhu Y."/>
            <person name="Xu X."/>
            <person name="Sun L."/>
            <person name="Chen S."/>
            <person name="Nie H."/>
            <person name="Peng J."/>
            <person name="Xu J."/>
            <person name="Wang Y."/>
            <person name="Yuan Z."/>
            <person name="Wen Y."/>
            <person name="Yao Z."/>
            <person name="Shen Y."/>
            <person name="Qiang B."/>
            <person name="Hou Y."/>
            <person name="Yu J."/>
            <person name="Jin Q."/>
        </authorList>
    </citation>
    <scope>NUCLEOTIDE SEQUENCE [LARGE SCALE GENOMIC DNA]</scope>
    <source>
        <strain>Sd197</strain>
    </source>
</reference>
<gene>
    <name evidence="1" type="primary">hisS</name>
    <name type="ordered locus">SDY_2710</name>
</gene>
<accession>Q32D48</accession>
<name>SYH_SHIDS</name>